<evidence type="ECO:0000250" key="1"/>
<evidence type="ECO:0000255" key="2"/>
<evidence type="ECO:0000255" key="3">
    <source>
        <dbReference type="PROSITE-ProRule" id="PRU00077"/>
    </source>
</evidence>
<evidence type="ECO:0000255" key="4">
    <source>
        <dbReference type="PROSITE-ProRule" id="PRU00448"/>
    </source>
</evidence>
<evidence type="ECO:0000256" key="5">
    <source>
        <dbReference type="SAM" id="MobiDB-lite"/>
    </source>
</evidence>
<evidence type="ECO:0000305" key="6"/>
<dbReference type="EMBL" id="CR382132">
    <property type="protein sequence ID" value="CAG77694.1"/>
    <property type="molecule type" value="Genomic_DNA"/>
</dbReference>
<dbReference type="RefSeq" id="XP_504892.1">
    <property type="nucleotide sequence ID" value="XM_504892.1"/>
</dbReference>
<dbReference type="FunCoup" id="Q6C370">
    <property type="interactions" value="111"/>
</dbReference>
<dbReference type="STRING" id="284591.Q6C370"/>
<dbReference type="EnsemblFungi" id="CAG77694">
    <property type="protein sequence ID" value="CAG77694"/>
    <property type="gene ID" value="YALI0_F02145g"/>
</dbReference>
<dbReference type="KEGG" id="yli:2908136"/>
<dbReference type="VEuPathDB" id="FungiDB:YALI0_F02145g"/>
<dbReference type="HOGENOM" id="CLU_040829_0_0_1"/>
<dbReference type="InParanoid" id="Q6C370"/>
<dbReference type="OMA" id="DWLIPES"/>
<dbReference type="OrthoDB" id="2301at4891"/>
<dbReference type="Proteomes" id="UP000001300">
    <property type="component" value="Chromosome F"/>
</dbReference>
<dbReference type="GO" id="GO:0030479">
    <property type="term" value="C:actin cortical patch"/>
    <property type="evidence" value="ECO:0007669"/>
    <property type="project" value="UniProtKB-SubCell"/>
</dbReference>
<dbReference type="GO" id="GO:0005737">
    <property type="term" value="C:cytoplasm"/>
    <property type="evidence" value="ECO:0000318"/>
    <property type="project" value="GO_Central"/>
</dbReference>
<dbReference type="GO" id="GO:0010008">
    <property type="term" value="C:endosome membrane"/>
    <property type="evidence" value="ECO:0007669"/>
    <property type="project" value="UniProtKB-SubCell"/>
</dbReference>
<dbReference type="GO" id="GO:0005886">
    <property type="term" value="C:plasma membrane"/>
    <property type="evidence" value="ECO:0000318"/>
    <property type="project" value="GO_Central"/>
</dbReference>
<dbReference type="GO" id="GO:0003779">
    <property type="term" value="F:actin binding"/>
    <property type="evidence" value="ECO:0007669"/>
    <property type="project" value="UniProtKB-KW"/>
</dbReference>
<dbReference type="GO" id="GO:0005509">
    <property type="term" value="F:calcium ion binding"/>
    <property type="evidence" value="ECO:0007669"/>
    <property type="project" value="InterPro"/>
</dbReference>
<dbReference type="GO" id="GO:0007015">
    <property type="term" value="P:actin filament organization"/>
    <property type="evidence" value="ECO:0007669"/>
    <property type="project" value="InterPro"/>
</dbReference>
<dbReference type="GO" id="GO:0006897">
    <property type="term" value="P:endocytosis"/>
    <property type="evidence" value="ECO:0000318"/>
    <property type="project" value="GO_Central"/>
</dbReference>
<dbReference type="GO" id="GO:0016197">
    <property type="term" value="P:endosomal transport"/>
    <property type="evidence" value="ECO:0000318"/>
    <property type="project" value="GO_Central"/>
</dbReference>
<dbReference type="CDD" id="cd00052">
    <property type="entry name" value="EH"/>
    <property type="match status" value="1"/>
</dbReference>
<dbReference type="Gene3D" id="1.10.238.10">
    <property type="entry name" value="EF-hand"/>
    <property type="match status" value="2"/>
</dbReference>
<dbReference type="InterPro" id="IPR011992">
    <property type="entry name" value="EF-hand-dom_pair"/>
</dbReference>
<dbReference type="InterPro" id="IPR018247">
    <property type="entry name" value="EF_Hand_1_Ca_BS"/>
</dbReference>
<dbReference type="InterPro" id="IPR002048">
    <property type="entry name" value="EF_hand_dom"/>
</dbReference>
<dbReference type="InterPro" id="IPR000261">
    <property type="entry name" value="EH_dom"/>
</dbReference>
<dbReference type="InterPro" id="IPR025604">
    <property type="entry name" value="End3"/>
</dbReference>
<dbReference type="PANTHER" id="PTHR11216:SF74">
    <property type="entry name" value="ACTIN CYTOSKELETON-REGULATORY COMPLEX PROTEIN END3"/>
    <property type="match status" value="1"/>
</dbReference>
<dbReference type="PANTHER" id="PTHR11216">
    <property type="entry name" value="EH DOMAIN"/>
    <property type="match status" value="1"/>
</dbReference>
<dbReference type="Pfam" id="PF12763">
    <property type="entry name" value="EH"/>
    <property type="match status" value="1"/>
</dbReference>
<dbReference type="Pfam" id="PF12761">
    <property type="entry name" value="End3"/>
    <property type="match status" value="1"/>
</dbReference>
<dbReference type="SMART" id="SM00054">
    <property type="entry name" value="EFh"/>
    <property type="match status" value="1"/>
</dbReference>
<dbReference type="SMART" id="SM00027">
    <property type="entry name" value="EH"/>
    <property type="match status" value="2"/>
</dbReference>
<dbReference type="SUPFAM" id="SSF47473">
    <property type="entry name" value="EF-hand"/>
    <property type="match status" value="2"/>
</dbReference>
<dbReference type="PROSITE" id="PS00018">
    <property type="entry name" value="EF_HAND_1"/>
    <property type="match status" value="1"/>
</dbReference>
<dbReference type="PROSITE" id="PS50222">
    <property type="entry name" value="EF_HAND_2"/>
    <property type="match status" value="1"/>
</dbReference>
<dbReference type="PROSITE" id="PS50031">
    <property type="entry name" value="EH"/>
    <property type="match status" value="2"/>
</dbReference>
<protein>
    <recommendedName>
        <fullName>Actin cytoskeleton-regulatory complex protein END3</fullName>
    </recommendedName>
    <alternativeName>
        <fullName>Endocytosis protein 3</fullName>
    </alternativeName>
</protein>
<proteinExistence type="inferred from homology"/>
<accession>Q6C370</accession>
<name>END3_YARLI</name>
<gene>
    <name type="primary">END3</name>
    <name type="ordered locus">YALI0F02145g</name>
</gene>
<reference key="1">
    <citation type="journal article" date="2004" name="Nature">
        <title>Genome evolution in yeasts.</title>
        <authorList>
            <person name="Dujon B."/>
            <person name="Sherman D."/>
            <person name="Fischer G."/>
            <person name="Durrens P."/>
            <person name="Casaregola S."/>
            <person name="Lafontaine I."/>
            <person name="de Montigny J."/>
            <person name="Marck C."/>
            <person name="Neuveglise C."/>
            <person name="Talla E."/>
            <person name="Goffard N."/>
            <person name="Frangeul L."/>
            <person name="Aigle M."/>
            <person name="Anthouard V."/>
            <person name="Babour A."/>
            <person name="Barbe V."/>
            <person name="Barnay S."/>
            <person name="Blanchin S."/>
            <person name="Beckerich J.-M."/>
            <person name="Beyne E."/>
            <person name="Bleykasten C."/>
            <person name="Boisrame A."/>
            <person name="Boyer J."/>
            <person name="Cattolico L."/>
            <person name="Confanioleri F."/>
            <person name="de Daruvar A."/>
            <person name="Despons L."/>
            <person name="Fabre E."/>
            <person name="Fairhead C."/>
            <person name="Ferry-Dumazet H."/>
            <person name="Groppi A."/>
            <person name="Hantraye F."/>
            <person name="Hennequin C."/>
            <person name="Jauniaux N."/>
            <person name="Joyet P."/>
            <person name="Kachouri R."/>
            <person name="Kerrest A."/>
            <person name="Koszul R."/>
            <person name="Lemaire M."/>
            <person name="Lesur I."/>
            <person name="Ma L."/>
            <person name="Muller H."/>
            <person name="Nicaud J.-M."/>
            <person name="Nikolski M."/>
            <person name="Oztas S."/>
            <person name="Ozier-Kalogeropoulos O."/>
            <person name="Pellenz S."/>
            <person name="Potier S."/>
            <person name="Richard G.-F."/>
            <person name="Straub M.-L."/>
            <person name="Suleau A."/>
            <person name="Swennen D."/>
            <person name="Tekaia F."/>
            <person name="Wesolowski-Louvel M."/>
            <person name="Westhof E."/>
            <person name="Wirth B."/>
            <person name="Zeniou-Meyer M."/>
            <person name="Zivanovic Y."/>
            <person name="Bolotin-Fukuhara M."/>
            <person name="Thierry A."/>
            <person name="Bouchier C."/>
            <person name="Caudron B."/>
            <person name="Scarpelli C."/>
            <person name="Gaillardin C."/>
            <person name="Weissenbach J."/>
            <person name="Wincker P."/>
            <person name="Souciet J.-L."/>
        </authorList>
    </citation>
    <scope>NUCLEOTIDE SEQUENCE [LARGE SCALE GENOMIC DNA]</scope>
    <source>
        <strain>CLIB 122 / E 150</strain>
    </source>
</reference>
<organism>
    <name type="scientific">Yarrowia lipolytica (strain CLIB 122 / E 150)</name>
    <name type="common">Yeast</name>
    <name type="synonym">Candida lipolytica</name>
    <dbReference type="NCBI Taxonomy" id="284591"/>
    <lineage>
        <taxon>Eukaryota</taxon>
        <taxon>Fungi</taxon>
        <taxon>Dikarya</taxon>
        <taxon>Ascomycota</taxon>
        <taxon>Saccharomycotina</taxon>
        <taxon>Dipodascomycetes</taxon>
        <taxon>Dipodascales</taxon>
        <taxon>Dipodascales incertae sedis</taxon>
        <taxon>Yarrowia</taxon>
    </lineage>
</organism>
<feature type="chain" id="PRO_0000349460" description="Actin cytoskeleton-regulatory complex protein END3">
    <location>
        <begin position="1"/>
        <end position="400"/>
    </location>
</feature>
<feature type="domain" description="EH 1" evidence="3">
    <location>
        <begin position="11"/>
        <end position="101"/>
    </location>
</feature>
<feature type="domain" description="EF-hand" evidence="4">
    <location>
        <begin position="43"/>
        <end position="78"/>
    </location>
</feature>
<feature type="domain" description="EH 2" evidence="3">
    <location>
        <begin position="141"/>
        <end position="230"/>
    </location>
</feature>
<feature type="region of interest" description="Disordered" evidence="5">
    <location>
        <begin position="344"/>
        <end position="364"/>
    </location>
</feature>
<feature type="coiled-coil region" evidence="2">
    <location>
        <begin position="287"/>
        <end position="400"/>
    </location>
</feature>
<feature type="binding site" evidence="4">
    <location>
        <position position="56"/>
    </location>
    <ligand>
        <name>Ca(2+)</name>
        <dbReference type="ChEBI" id="CHEBI:29108"/>
    </ligand>
</feature>
<feature type="binding site" evidence="4">
    <location>
        <position position="58"/>
    </location>
    <ligand>
        <name>Ca(2+)</name>
        <dbReference type="ChEBI" id="CHEBI:29108"/>
    </ligand>
</feature>
<feature type="binding site" evidence="4">
    <location>
        <position position="60"/>
    </location>
    <ligand>
        <name>Ca(2+)</name>
        <dbReference type="ChEBI" id="CHEBI:29108"/>
    </ligand>
</feature>
<feature type="binding site" evidence="4">
    <location>
        <position position="62"/>
    </location>
    <ligand>
        <name>Ca(2+)</name>
        <dbReference type="ChEBI" id="CHEBI:29108"/>
    </ligand>
</feature>
<feature type="binding site" evidence="4">
    <location>
        <position position="67"/>
    </location>
    <ligand>
        <name>Ca(2+)</name>
        <dbReference type="ChEBI" id="CHEBI:29108"/>
    </ligand>
</feature>
<keyword id="KW-0009">Actin-binding</keyword>
<keyword id="KW-0106">Calcium</keyword>
<keyword id="KW-1003">Cell membrane</keyword>
<keyword id="KW-0175">Coiled coil</keyword>
<keyword id="KW-0963">Cytoplasm</keyword>
<keyword id="KW-0206">Cytoskeleton</keyword>
<keyword id="KW-0254">Endocytosis</keyword>
<keyword id="KW-0967">Endosome</keyword>
<keyword id="KW-0472">Membrane</keyword>
<keyword id="KW-0479">Metal-binding</keyword>
<keyword id="KW-1185">Reference proteome</keyword>
<keyword id="KW-0677">Repeat</keyword>
<comment type="function">
    <text evidence="1">Component of the PAN1 actin cytoskeleton-regulatory complex required for the internalization of endosomes during actin-coupled endocytosis. The complex links the site of endocytosis to the cell membrane-associated actin cytoskeleton. Mediates uptake of external molecules and vacuolar degradation of plasma membrane proteins. Plays a role in the proper organization of the cell membrane-associated actin cytoskeleton and promotes its destabilization (By similarity).</text>
</comment>
<comment type="subunit">
    <text evidence="1">Component of the PAN1 actin cytoskeleton-regulatory complex.</text>
</comment>
<comment type="subcellular location">
    <subcellularLocation>
        <location evidence="1">Cell membrane</location>
        <topology evidence="1">Peripheral membrane protein</topology>
        <orientation evidence="1">Cytoplasmic side</orientation>
    </subcellularLocation>
    <subcellularLocation>
        <location evidence="1">Endosome membrane</location>
        <topology evidence="1">Peripheral membrane protein</topology>
        <orientation evidence="1">Cytoplasmic side</orientation>
    </subcellularLocation>
    <subcellularLocation>
        <location evidence="1">Cytoplasm</location>
        <location evidence="1">Cytoskeleton</location>
        <location evidence="1">Actin patch</location>
    </subcellularLocation>
    <text evidence="1">Cytoplasmic and cortical actin patches.</text>
</comment>
<comment type="similarity">
    <text evidence="6">Belongs to the END3 family.</text>
</comment>
<sequence>MSAQGKLEEWEINKYWDIFSGLKPVNNVLTGDQVSPVLKNSNLSEDKLAKIWDLADVDSDGCLDFEEFCITMRLIFDLLNNNINDVPSTLPQWLVPQSKAHLIEANKAISQPHSKLDDSDDEDLENLGLSTDFDWYISPADRDSYSAIFTANCDRHGRVSYDALTELYQTLSRVPEGDIAMAWNLVNPKSDERIEKEQCLVFLHMLNYREKGVRIPRGVPASLRATFEKATPEFSINSSQAELKPQKSNAPASKKEAFANGYLQKLGIGGNSYSTSGTDFSATKDTDWEEVRLKRELTDLENLVEKAERAAADSKQHGNSYSTSHTALIKRELEQLLDYKEEQLRKAKSGAPASVGETNLKESEEEVNLLEMQVNELEVHQQRKQQELDQLEAELASLRK</sequence>